<comment type="function">
    <text>This protein causes filamentation.</text>
</comment>
<dbReference type="EMBL" id="X15001">
    <property type="protein sequence ID" value="CAA33107.1"/>
    <property type="molecule type" value="Genomic_DNA"/>
</dbReference>
<dbReference type="EMBL" id="U32222">
    <property type="protein sequence ID" value="AAC34179.1"/>
    <property type="molecule type" value="Genomic_DNA"/>
</dbReference>
<dbReference type="PIR" id="S03594">
    <property type="entry name" value="S03594"/>
</dbReference>
<dbReference type="RefSeq" id="NP_052282.1">
    <property type="nucleotide sequence ID" value="NC_001317.1"/>
</dbReference>
<dbReference type="GeneID" id="1262430"/>
<dbReference type="KEGG" id="vg:1262430"/>
<dbReference type="OrthoDB" id="28702at10239"/>
<dbReference type="Proteomes" id="UP000000369">
    <property type="component" value="Segment"/>
</dbReference>
<dbReference type="InterPro" id="IPR021221">
    <property type="entry name" value="Fil"/>
</dbReference>
<dbReference type="Pfam" id="PF10893">
    <property type="entry name" value="Phage_186_Fil"/>
    <property type="match status" value="1"/>
</dbReference>
<accession>P15236</accession>
<gene>
    <name type="primary">fil</name>
    <name type="synonym">CP77</name>
</gene>
<name>VFIL_BP186</name>
<sequence length="75" mass="8409">MLKSEPSFASLLVKQSPGMHYGHGWIAGKDGKRWHPCRSQSELLKGLKTKSPKSSGFLIIRIVHFVIKGVKHVTR</sequence>
<reference key="1">
    <citation type="journal article" date="1989" name="J. Mol. Biol.">
        <title>Control of gene expression in the P2-related temperate coliphage 186. VI. Sequence analysis of the early lytic region.</title>
        <authorList>
            <person name="Richardson H."/>
            <person name="Puspurs A."/>
            <person name="Egan J.B."/>
        </authorList>
    </citation>
    <scope>NUCLEOTIDE SEQUENCE [GENOMIC DNA]</scope>
</reference>
<reference key="2">
    <citation type="journal article" date="1989" name="J. Mol. Biol.">
        <title>DNA replication studies with coliphage 186. II. Depression of host replication by a 186 gene.</title>
        <authorList>
            <person name="Richardson H."/>
            <person name="Egan J.B."/>
        </authorList>
    </citation>
    <scope>CHARACTERIZATION</scope>
</reference>
<organismHost>
    <name type="scientific">Escherichia coli</name>
    <dbReference type="NCBI Taxonomy" id="562"/>
</organismHost>
<keyword id="KW-0244">Early protein</keyword>
<keyword id="KW-1185">Reference proteome</keyword>
<protein>
    <recommendedName>
        <fullName>Protein fil</fullName>
    </recommendedName>
</protein>
<proteinExistence type="evidence at protein level"/>
<organism>
    <name type="scientific">Escherichia phage 186</name>
    <name type="common">Bacteriophage 186</name>
    <dbReference type="NCBI Taxonomy" id="29252"/>
    <lineage>
        <taxon>Viruses</taxon>
        <taxon>Duplodnaviria</taxon>
        <taxon>Heunggongvirae</taxon>
        <taxon>Uroviricota</taxon>
        <taxon>Caudoviricetes</taxon>
        <taxon>Peduoviridae</taxon>
        <taxon>Eganvirus</taxon>
    </lineage>
</organism>
<feature type="chain" id="PRO_0000165296" description="Protein fil">
    <location>
        <begin position="1"/>
        <end position="75"/>
    </location>
</feature>